<accession>Q5HPK8</accession>
<gene>
    <name type="primary">katA</name>
    <name type="ordered locus">SERP0903</name>
</gene>
<reference key="1">
    <citation type="journal article" date="2005" name="J. Bacteriol.">
        <title>Insights on evolution of virulence and resistance from the complete genome analysis of an early methicillin-resistant Staphylococcus aureus strain and a biofilm-producing methicillin-resistant Staphylococcus epidermidis strain.</title>
        <authorList>
            <person name="Gill S.R."/>
            <person name="Fouts D.E."/>
            <person name="Archer G.L."/>
            <person name="Mongodin E.F."/>
            <person name="DeBoy R.T."/>
            <person name="Ravel J."/>
            <person name="Paulsen I.T."/>
            <person name="Kolonay J.F."/>
            <person name="Brinkac L.M."/>
            <person name="Beanan M.J."/>
            <person name="Dodson R.J."/>
            <person name="Daugherty S.C."/>
            <person name="Madupu R."/>
            <person name="Angiuoli S.V."/>
            <person name="Durkin A.S."/>
            <person name="Haft D.H."/>
            <person name="Vamathevan J.J."/>
            <person name="Khouri H."/>
            <person name="Utterback T.R."/>
            <person name="Lee C."/>
            <person name="Dimitrov G."/>
            <person name="Jiang L."/>
            <person name="Qin H."/>
            <person name="Weidman J."/>
            <person name="Tran K."/>
            <person name="Kang K.H."/>
            <person name="Hance I.R."/>
            <person name="Nelson K.E."/>
            <person name="Fraser C.M."/>
        </authorList>
    </citation>
    <scope>NUCLEOTIDE SEQUENCE [LARGE SCALE GENOMIC DNA]</scope>
    <source>
        <strain>ATCC 35984 / DSM 28319 / BCRC 17069 / CCUG 31568 / BM 3577 / RP62A</strain>
    </source>
</reference>
<comment type="function">
    <text evidence="1">Decomposes hydrogen peroxide into water and oxygen; serves to protect cells from the toxic effects of hydrogen peroxide.</text>
</comment>
<comment type="catalytic activity">
    <reaction evidence="2">
        <text>2 H2O2 = O2 + 2 H2O</text>
        <dbReference type="Rhea" id="RHEA:20309"/>
        <dbReference type="ChEBI" id="CHEBI:15377"/>
        <dbReference type="ChEBI" id="CHEBI:15379"/>
        <dbReference type="ChEBI" id="CHEBI:16240"/>
        <dbReference type="EC" id="1.11.1.6"/>
    </reaction>
</comment>
<comment type="cofactor">
    <cofactor evidence="1">
        <name>heme</name>
        <dbReference type="ChEBI" id="CHEBI:30413"/>
    </cofactor>
</comment>
<comment type="subunit">
    <text evidence="1">Homodimer.</text>
</comment>
<comment type="similarity">
    <text evidence="4">Belongs to the catalase family.</text>
</comment>
<name>CATA_STAEQ</name>
<sequence>MSKQDGKLTGLFGAPVSDRENSMTAGQRGPLLMQDVYYLEQISHFDREVIPERRMHAKGSGAFGTFTVTNDITQYTNAKIFSEVGKQTEMFARFSTVSGERGAADLERDIRGFALKFYTEDGNWDLVGNNTPVFFFRDPKLFISLNRAVKRDPRTNMRSAQNNWDFWTGLPEALHQVTILMSDRGMPKGFRNMHGFGSHTYSMYNDKGERVWVKYHFRTQQGIENYTDEEAAKIVGMDRDSSQRDLYNAIENGDYPKWKMYIQVMTEEQAKNHPDNPFDLTKVWYKKDYPLIEVGEFELNRNPENYFLDVEQAAFTPTNIVPGLDYSPDKMLQGRLFSYGDAQRYRLGVNHWQIPVNQPKGVGVENLCPFSRDGQMRFLDNNQGGGPHYYPNNQGIYESQPEHKKPPFPTDGDGYEYNYRQDDDNYFEQPGKLFRLQSEDAKERIFTNTANAMDGVSKDVKVRHIRHCYKADPEYGKGVAKALGIDINQIDLETNQDETYENFK</sequence>
<protein>
    <recommendedName>
        <fullName>Catalase</fullName>
        <ecNumber>1.11.1.6</ecNumber>
    </recommendedName>
</protein>
<proteinExistence type="inferred from homology"/>
<keyword id="KW-0349">Heme</keyword>
<keyword id="KW-0376">Hydrogen peroxide</keyword>
<keyword id="KW-0408">Iron</keyword>
<keyword id="KW-0479">Metal-binding</keyword>
<keyword id="KW-0560">Oxidoreductase</keyword>
<keyword id="KW-0575">Peroxidase</keyword>
<keyword id="KW-1185">Reference proteome</keyword>
<dbReference type="EC" id="1.11.1.6"/>
<dbReference type="EMBL" id="CP000029">
    <property type="protein sequence ID" value="AAW54263.1"/>
    <property type="molecule type" value="Genomic_DNA"/>
</dbReference>
<dbReference type="RefSeq" id="WP_001831169.1">
    <property type="nucleotide sequence ID" value="NC_002976.3"/>
</dbReference>
<dbReference type="SMR" id="Q5HPK8"/>
<dbReference type="STRING" id="176279.SERP0903"/>
<dbReference type="KEGG" id="ser:SERP0903"/>
<dbReference type="eggNOG" id="COG0753">
    <property type="taxonomic scope" value="Bacteria"/>
</dbReference>
<dbReference type="HOGENOM" id="CLU_010645_2_0_9"/>
<dbReference type="Proteomes" id="UP000000531">
    <property type="component" value="Chromosome"/>
</dbReference>
<dbReference type="GO" id="GO:0005737">
    <property type="term" value="C:cytoplasm"/>
    <property type="evidence" value="ECO:0007669"/>
    <property type="project" value="TreeGrafter"/>
</dbReference>
<dbReference type="GO" id="GO:0004096">
    <property type="term" value="F:catalase activity"/>
    <property type="evidence" value="ECO:0007669"/>
    <property type="project" value="UniProtKB-EC"/>
</dbReference>
<dbReference type="GO" id="GO:0020037">
    <property type="term" value="F:heme binding"/>
    <property type="evidence" value="ECO:0007669"/>
    <property type="project" value="InterPro"/>
</dbReference>
<dbReference type="GO" id="GO:0046872">
    <property type="term" value="F:metal ion binding"/>
    <property type="evidence" value="ECO:0007669"/>
    <property type="project" value="UniProtKB-KW"/>
</dbReference>
<dbReference type="GO" id="GO:0042744">
    <property type="term" value="P:hydrogen peroxide catabolic process"/>
    <property type="evidence" value="ECO:0007669"/>
    <property type="project" value="UniProtKB-KW"/>
</dbReference>
<dbReference type="GO" id="GO:0042542">
    <property type="term" value="P:response to hydrogen peroxide"/>
    <property type="evidence" value="ECO:0007669"/>
    <property type="project" value="TreeGrafter"/>
</dbReference>
<dbReference type="CDD" id="cd08156">
    <property type="entry name" value="catalase_clade_3"/>
    <property type="match status" value="1"/>
</dbReference>
<dbReference type="FunFam" id="2.40.180.10:FF:000001">
    <property type="entry name" value="Catalase"/>
    <property type="match status" value="1"/>
</dbReference>
<dbReference type="Gene3D" id="2.40.180.10">
    <property type="entry name" value="Catalase core domain"/>
    <property type="match status" value="1"/>
</dbReference>
<dbReference type="InterPro" id="IPR018028">
    <property type="entry name" value="Catalase"/>
</dbReference>
<dbReference type="InterPro" id="IPR040333">
    <property type="entry name" value="Catalase_3"/>
</dbReference>
<dbReference type="InterPro" id="IPR024708">
    <property type="entry name" value="Catalase_AS"/>
</dbReference>
<dbReference type="InterPro" id="IPR024711">
    <property type="entry name" value="Catalase_clade1/3"/>
</dbReference>
<dbReference type="InterPro" id="IPR011614">
    <property type="entry name" value="Catalase_core"/>
</dbReference>
<dbReference type="InterPro" id="IPR002226">
    <property type="entry name" value="Catalase_haem_BS"/>
</dbReference>
<dbReference type="InterPro" id="IPR010582">
    <property type="entry name" value="Catalase_immune_responsive"/>
</dbReference>
<dbReference type="InterPro" id="IPR020835">
    <property type="entry name" value="Catalase_sf"/>
</dbReference>
<dbReference type="PANTHER" id="PTHR11465">
    <property type="entry name" value="CATALASE"/>
    <property type="match status" value="1"/>
</dbReference>
<dbReference type="PANTHER" id="PTHR11465:SF61">
    <property type="entry name" value="CATALASE"/>
    <property type="match status" value="1"/>
</dbReference>
<dbReference type="Pfam" id="PF00199">
    <property type="entry name" value="Catalase"/>
    <property type="match status" value="1"/>
</dbReference>
<dbReference type="Pfam" id="PF06628">
    <property type="entry name" value="Catalase-rel"/>
    <property type="match status" value="1"/>
</dbReference>
<dbReference type="PIRSF" id="PIRSF038928">
    <property type="entry name" value="Catalase_clade1-3"/>
    <property type="match status" value="1"/>
</dbReference>
<dbReference type="PRINTS" id="PR00067">
    <property type="entry name" value="CATALASE"/>
</dbReference>
<dbReference type="SMART" id="SM01060">
    <property type="entry name" value="Catalase"/>
    <property type="match status" value="1"/>
</dbReference>
<dbReference type="SUPFAM" id="SSF56634">
    <property type="entry name" value="Heme-dependent catalase-like"/>
    <property type="match status" value="1"/>
</dbReference>
<dbReference type="PROSITE" id="PS00437">
    <property type="entry name" value="CATALASE_1"/>
    <property type="match status" value="1"/>
</dbReference>
<dbReference type="PROSITE" id="PS00438">
    <property type="entry name" value="CATALASE_2"/>
    <property type="match status" value="1"/>
</dbReference>
<dbReference type="PROSITE" id="PS51402">
    <property type="entry name" value="CATALASE_3"/>
    <property type="match status" value="1"/>
</dbReference>
<evidence type="ECO:0000250" key="1"/>
<evidence type="ECO:0000255" key="2">
    <source>
        <dbReference type="PROSITE-ProRule" id="PRU10013"/>
    </source>
</evidence>
<evidence type="ECO:0000256" key="3">
    <source>
        <dbReference type="SAM" id="MobiDB-lite"/>
    </source>
</evidence>
<evidence type="ECO:0000305" key="4"/>
<feature type="chain" id="PRO_0000085004" description="Catalase">
    <location>
        <begin position="1"/>
        <end position="504"/>
    </location>
</feature>
<feature type="region of interest" description="Disordered" evidence="3">
    <location>
        <begin position="1"/>
        <end position="25"/>
    </location>
</feature>
<feature type="active site" evidence="2">
    <location>
        <position position="56"/>
    </location>
</feature>
<feature type="active site" evidence="2">
    <location>
        <position position="129"/>
    </location>
</feature>
<feature type="binding site" description="axial binding residue" evidence="1">
    <location>
        <position position="339"/>
    </location>
    <ligand>
        <name>heme</name>
        <dbReference type="ChEBI" id="CHEBI:30413"/>
    </ligand>
    <ligandPart>
        <name>Fe</name>
        <dbReference type="ChEBI" id="CHEBI:18248"/>
    </ligandPart>
</feature>
<organism>
    <name type="scientific">Staphylococcus epidermidis (strain ATCC 35984 / DSM 28319 / BCRC 17069 / CCUG 31568 / BM 3577 / RP62A)</name>
    <dbReference type="NCBI Taxonomy" id="176279"/>
    <lineage>
        <taxon>Bacteria</taxon>
        <taxon>Bacillati</taxon>
        <taxon>Bacillota</taxon>
        <taxon>Bacilli</taxon>
        <taxon>Bacillales</taxon>
        <taxon>Staphylococcaceae</taxon>
        <taxon>Staphylococcus</taxon>
    </lineage>
</organism>